<sequence length="614" mass="68229">MSTLKKISDEDRESKFGYVFAVSGPVVTAERMSGSAMYELVRVGYYELVGEIIRLEGDMATIQVYEETSGVTVGDPVLRTGKPLSVELGPGIMGSIFDGIQRPLKDINELTSSIYIPKGVNIPCLSRTQSWGFNPLNVKVGSHITGGDLYGLVHENTLVKHKLLVPPRAKGTVRYIAPPGNYTVDDIILETEFDGEINKWSMLQVWPVRQPRPVTEKLPANHPLLTGQRVLDSLFPCVQGGTTAIPGAFGCGKTVISQALSKYSNSDVIIYVGCGERGNEMSEVLRDFPELSVEIDGVTESIMKRTALVANTSNMPVAAREASIYTGITLSEYFRDMGYNVSMMADSTSRWAEALREISGRLAEMPADSGYPAYLGARLASFYERAGRVKCLGNPEREGSVSIVGAVSPPGGDFSDPVTSATLGIVQVFWGLDKKLAQRKHFPSINWLISYSKYMRALDDFYDKNFQEFVPLRTKVKEILQEEEDLSEIVQLVGKASLAETDKITLEVAKLLKDDFLQQNSYSAYDRFCPFYKTVGMLRNMIGFYDMARHAVETTAQSENKITWNVIRDSMGNILYQLSSMKFKDPVKDGEAKIKADFDQLYEDLQQAFRNLED</sequence>
<gene>
    <name type="primary">VhaA</name>
    <name type="ORF">AAEL008787</name>
</gene>
<name>VATA_AEDAE</name>
<dbReference type="EC" id="7.1.2.2" evidence="3"/>
<dbReference type="EMBL" id="AF008922">
    <property type="protein sequence ID" value="AAB71659.1"/>
    <property type="molecule type" value="mRNA"/>
</dbReference>
<dbReference type="EMBL" id="CH477534">
    <property type="protein sequence ID" value="EAT39398.1"/>
    <property type="molecule type" value="Genomic_DNA"/>
</dbReference>
<dbReference type="RefSeq" id="XP_001659520.1">
    <property type="nucleotide sequence ID" value="XM_001659470.1"/>
</dbReference>
<dbReference type="SMR" id="O16109"/>
<dbReference type="FunCoup" id="O16109">
    <property type="interactions" value="1596"/>
</dbReference>
<dbReference type="STRING" id="7159.O16109"/>
<dbReference type="PaxDb" id="7159-AAEL008787-PA"/>
<dbReference type="EnsemblMetazoa" id="AAEL008787-RA">
    <property type="protein sequence ID" value="AAEL008787-PA"/>
    <property type="gene ID" value="AAEL008787"/>
</dbReference>
<dbReference type="VEuPathDB" id="VectorBase:AAEL008787"/>
<dbReference type="eggNOG" id="KOG1352">
    <property type="taxonomic scope" value="Eukaryota"/>
</dbReference>
<dbReference type="HOGENOM" id="CLU_008162_3_1_1"/>
<dbReference type="InParanoid" id="O16109"/>
<dbReference type="OMA" id="RIVKTFW"/>
<dbReference type="OrthoDB" id="1676488at2759"/>
<dbReference type="PhylomeDB" id="O16109"/>
<dbReference type="Proteomes" id="UP000008820">
    <property type="component" value="Chromosome 3"/>
</dbReference>
<dbReference type="Proteomes" id="UP000682892">
    <property type="component" value="Unassembled WGS sequence"/>
</dbReference>
<dbReference type="GO" id="GO:0005765">
    <property type="term" value="C:lysosomal membrane"/>
    <property type="evidence" value="ECO:0007669"/>
    <property type="project" value="TreeGrafter"/>
</dbReference>
<dbReference type="GO" id="GO:0033180">
    <property type="term" value="C:proton-transporting V-type ATPase, V1 domain"/>
    <property type="evidence" value="ECO:0007669"/>
    <property type="project" value="InterPro"/>
</dbReference>
<dbReference type="GO" id="GO:0005524">
    <property type="term" value="F:ATP binding"/>
    <property type="evidence" value="ECO:0007669"/>
    <property type="project" value="UniProtKB-KW"/>
</dbReference>
<dbReference type="GO" id="GO:0016887">
    <property type="term" value="F:ATP hydrolysis activity"/>
    <property type="evidence" value="ECO:0007669"/>
    <property type="project" value="InterPro"/>
</dbReference>
<dbReference type="GO" id="GO:0046961">
    <property type="term" value="F:proton-transporting ATPase activity, rotational mechanism"/>
    <property type="evidence" value="ECO:0007669"/>
    <property type="project" value="InterPro"/>
</dbReference>
<dbReference type="GO" id="GO:0046034">
    <property type="term" value="P:ATP metabolic process"/>
    <property type="evidence" value="ECO:0007669"/>
    <property type="project" value="InterPro"/>
</dbReference>
<dbReference type="CDD" id="cd18111">
    <property type="entry name" value="ATP-synt_V_A-type_alpha_C"/>
    <property type="match status" value="1"/>
</dbReference>
<dbReference type="CDD" id="cd18119">
    <property type="entry name" value="ATP-synt_V_A-type_alpha_N"/>
    <property type="match status" value="1"/>
</dbReference>
<dbReference type="CDD" id="cd01134">
    <property type="entry name" value="V_A-ATPase_A"/>
    <property type="match status" value="1"/>
</dbReference>
<dbReference type="FunFam" id="1.10.1140.10:FF:000002">
    <property type="entry name" value="V-type proton ATPase catalytic subunit A"/>
    <property type="match status" value="1"/>
</dbReference>
<dbReference type="FunFam" id="2.40.30.20:FF:000002">
    <property type="entry name" value="V-type proton ATPase catalytic subunit A"/>
    <property type="match status" value="1"/>
</dbReference>
<dbReference type="FunFam" id="2.40.50.100:FF:000008">
    <property type="entry name" value="V-type proton ATPase catalytic subunit A"/>
    <property type="match status" value="1"/>
</dbReference>
<dbReference type="FunFam" id="3.40.50.300:FF:000052">
    <property type="entry name" value="V-type proton ATPase catalytic subunit A"/>
    <property type="match status" value="1"/>
</dbReference>
<dbReference type="Gene3D" id="2.40.30.20">
    <property type="match status" value="1"/>
</dbReference>
<dbReference type="Gene3D" id="2.40.50.100">
    <property type="match status" value="1"/>
</dbReference>
<dbReference type="Gene3D" id="1.10.1140.10">
    <property type="entry name" value="Bovine Mitochondrial F1-atpase, Atp Synthase Beta Chain, Chain D, domain 3"/>
    <property type="match status" value="1"/>
</dbReference>
<dbReference type="Gene3D" id="3.40.50.300">
    <property type="entry name" value="P-loop containing nucleotide triphosphate hydrolases"/>
    <property type="match status" value="1"/>
</dbReference>
<dbReference type="HAMAP" id="MF_00309">
    <property type="entry name" value="ATP_synth_A_arch"/>
    <property type="match status" value="1"/>
</dbReference>
<dbReference type="InterPro" id="IPR055190">
    <property type="entry name" value="ATP-synt_VA_C"/>
</dbReference>
<dbReference type="InterPro" id="IPR031686">
    <property type="entry name" value="ATP-synth_a_Xtn"/>
</dbReference>
<dbReference type="InterPro" id="IPR023366">
    <property type="entry name" value="ATP_synth_asu-like_sf"/>
</dbReference>
<dbReference type="InterPro" id="IPR020003">
    <property type="entry name" value="ATPase_a/bsu_AS"/>
</dbReference>
<dbReference type="InterPro" id="IPR004100">
    <property type="entry name" value="ATPase_F1/V1/A1_a/bsu_N"/>
</dbReference>
<dbReference type="InterPro" id="IPR036121">
    <property type="entry name" value="ATPase_F1/V1/A1_a/bsu_N_sf"/>
</dbReference>
<dbReference type="InterPro" id="IPR000194">
    <property type="entry name" value="ATPase_F1/V1/A1_a/bsu_nucl-bd"/>
</dbReference>
<dbReference type="InterPro" id="IPR024034">
    <property type="entry name" value="ATPase_F1/V1_b/a_C"/>
</dbReference>
<dbReference type="InterPro" id="IPR005725">
    <property type="entry name" value="ATPase_V1-cplx_asu"/>
</dbReference>
<dbReference type="InterPro" id="IPR027417">
    <property type="entry name" value="P-loop_NTPase"/>
</dbReference>
<dbReference type="InterPro" id="IPR022878">
    <property type="entry name" value="V-ATPase_asu"/>
</dbReference>
<dbReference type="NCBIfam" id="NF003220">
    <property type="entry name" value="PRK04192.1"/>
    <property type="match status" value="1"/>
</dbReference>
<dbReference type="NCBIfam" id="TIGR01042">
    <property type="entry name" value="V-ATPase_V1_A"/>
    <property type="match status" value="1"/>
</dbReference>
<dbReference type="PANTHER" id="PTHR43607:SF1">
    <property type="entry name" value="H(+)-TRANSPORTING TWO-SECTOR ATPASE"/>
    <property type="match status" value="1"/>
</dbReference>
<dbReference type="PANTHER" id="PTHR43607">
    <property type="entry name" value="V-TYPE PROTON ATPASE CATALYTIC SUBUNIT A"/>
    <property type="match status" value="1"/>
</dbReference>
<dbReference type="Pfam" id="PF00006">
    <property type="entry name" value="ATP-synt_ab"/>
    <property type="match status" value="1"/>
</dbReference>
<dbReference type="Pfam" id="PF02874">
    <property type="entry name" value="ATP-synt_ab_N"/>
    <property type="match status" value="1"/>
</dbReference>
<dbReference type="Pfam" id="PF16886">
    <property type="entry name" value="ATP-synt_ab_Xtn"/>
    <property type="match status" value="1"/>
</dbReference>
<dbReference type="Pfam" id="PF22919">
    <property type="entry name" value="ATP-synt_VA_C"/>
    <property type="match status" value="1"/>
</dbReference>
<dbReference type="SUPFAM" id="SSF47917">
    <property type="entry name" value="C-terminal domain of alpha and beta subunits of F1 ATP synthase"/>
    <property type="match status" value="1"/>
</dbReference>
<dbReference type="SUPFAM" id="SSF50615">
    <property type="entry name" value="N-terminal domain of alpha and beta subunits of F1 ATP synthase"/>
    <property type="match status" value="1"/>
</dbReference>
<dbReference type="SUPFAM" id="SSF52540">
    <property type="entry name" value="P-loop containing nucleoside triphosphate hydrolases"/>
    <property type="match status" value="1"/>
</dbReference>
<dbReference type="PROSITE" id="PS00152">
    <property type="entry name" value="ATPASE_ALPHA_BETA"/>
    <property type="match status" value="1"/>
</dbReference>
<comment type="function">
    <text evidence="2 3">Catalytic subunit of the V1 complex of vacuolar(H+)-ATPase (V-ATPase), a multisubunit enzyme composed of a peripheral complex (V1) that hydrolyzes ATP and a membrane integral complex (V0) that translocates protons (By similarity). V-ATPase is responsible for acidifying and maintaining the pH of intracellular compartments and in some cell types, is targeted to the plasma membrane, where it is responsible for acidifying the extracellular environment (By similarity).</text>
</comment>
<comment type="catalytic activity">
    <reaction evidence="3">
        <text>ATP + H2O + 4 H(+)(in) = ADP + phosphate + 5 H(+)(out)</text>
        <dbReference type="Rhea" id="RHEA:57720"/>
        <dbReference type="ChEBI" id="CHEBI:15377"/>
        <dbReference type="ChEBI" id="CHEBI:15378"/>
        <dbReference type="ChEBI" id="CHEBI:30616"/>
        <dbReference type="ChEBI" id="CHEBI:43474"/>
        <dbReference type="ChEBI" id="CHEBI:456216"/>
        <dbReference type="EC" id="7.1.2.2"/>
    </reaction>
</comment>
<comment type="activity regulation">
    <text evidence="1">ATP hydrolysis occurs at the interface between the nucleotide-binding domains of subunits A and B (By similarity). ATP hydrolysis triggers a conformational change in the subunits D and F, which induces a shift of subunit d (By similarity). The c-ring is subsequently rotated and results in a continuous proton translocation across the membrane (By similarity).</text>
</comment>
<comment type="subunit">
    <text evidence="2">V-ATPase is a heteromultimeric enzyme made up of two complexes: the ATP-hydrolytic V1 complex and the proton translocation V0 complex (By similarity). The V1 complex consists of three catalytic AB heterodimers that form a heterohexamer, three peripheral stalks each consisting of EG heterodimers, one central rotor including subunits D and F, and the regulatory subunits C and H (By similarity). The proton translocation complex V0 consists of the proton transport subunit a, a ring of proteolipid subunits c9c'', rotary subunit d, subunits e and f, and the accessory subunits VhaAC45 and ATP6AP2 (By similarity).</text>
</comment>
<comment type="similarity">
    <text evidence="5">Belongs to the ATPase alpha/beta chains family.</text>
</comment>
<accession>O16109</accession>
<accession>Q16XP4</accession>
<reference key="1">
    <citation type="journal article" date="1998" name="Arch. Insect Biochem. Physiol.">
        <title>Isolation of the V-ATPase A and c subunit cDNAs from mosquito midgut and Malpighian tubules.</title>
        <authorList>
            <person name="Gill S.S."/>
            <person name="Chu P.B."/>
            <person name="Smethurst P."/>
            <person name="Pietrantonio P.V."/>
            <person name="Ross L.S."/>
        </authorList>
    </citation>
    <scope>NUCLEOTIDE SEQUENCE [MRNA]</scope>
</reference>
<reference key="2">
    <citation type="journal article" date="2007" name="Science">
        <title>Genome sequence of Aedes aegypti, a major arbovirus vector.</title>
        <authorList>
            <person name="Nene V."/>
            <person name="Wortman J.R."/>
            <person name="Lawson D."/>
            <person name="Haas B.J."/>
            <person name="Kodira C.D."/>
            <person name="Tu Z.J."/>
            <person name="Loftus B.J."/>
            <person name="Xi Z."/>
            <person name="Megy K."/>
            <person name="Grabherr M."/>
            <person name="Ren Q."/>
            <person name="Zdobnov E.M."/>
            <person name="Lobo N.F."/>
            <person name="Campbell K.S."/>
            <person name="Brown S.E."/>
            <person name="Bonaldo M.F."/>
            <person name="Zhu J."/>
            <person name="Sinkins S.P."/>
            <person name="Hogenkamp D.G."/>
            <person name="Amedeo P."/>
            <person name="Arensburger P."/>
            <person name="Atkinson P.W."/>
            <person name="Bidwell S.L."/>
            <person name="Biedler J."/>
            <person name="Birney E."/>
            <person name="Bruggner R.V."/>
            <person name="Costas J."/>
            <person name="Coy M.R."/>
            <person name="Crabtree J."/>
            <person name="Crawford M."/>
            <person name="DeBruyn B."/>
            <person name="DeCaprio D."/>
            <person name="Eiglmeier K."/>
            <person name="Eisenstadt E."/>
            <person name="El-Dorry H."/>
            <person name="Gelbart W.M."/>
            <person name="Gomes S.L."/>
            <person name="Hammond M."/>
            <person name="Hannick L.I."/>
            <person name="Hogan J.R."/>
            <person name="Holmes M.H."/>
            <person name="Jaffe D."/>
            <person name="Johnston S.J."/>
            <person name="Kennedy R.C."/>
            <person name="Koo H."/>
            <person name="Kravitz S."/>
            <person name="Kriventseva E.V."/>
            <person name="Kulp D."/>
            <person name="Labutti K."/>
            <person name="Lee E."/>
            <person name="Li S."/>
            <person name="Lovin D.D."/>
            <person name="Mao C."/>
            <person name="Mauceli E."/>
            <person name="Menck C.F."/>
            <person name="Miller J.R."/>
            <person name="Montgomery P."/>
            <person name="Mori A."/>
            <person name="Nascimento A.L."/>
            <person name="Naveira H.F."/>
            <person name="Nusbaum C."/>
            <person name="O'Leary S.B."/>
            <person name="Orvis J."/>
            <person name="Pertea M."/>
            <person name="Quesneville H."/>
            <person name="Reidenbach K.R."/>
            <person name="Rogers Y.-H.C."/>
            <person name="Roth C.W."/>
            <person name="Schneider J.R."/>
            <person name="Schatz M."/>
            <person name="Shumway M."/>
            <person name="Stanke M."/>
            <person name="Stinson E.O."/>
            <person name="Tubio J.M.C."/>
            <person name="Vanzee J.P."/>
            <person name="Verjovski-Almeida S."/>
            <person name="Werner D."/>
            <person name="White O.R."/>
            <person name="Wyder S."/>
            <person name="Zeng Q."/>
            <person name="Zhao Q."/>
            <person name="Zhao Y."/>
            <person name="Hill C.A."/>
            <person name="Raikhel A.S."/>
            <person name="Soares M.B."/>
            <person name="Knudson D.L."/>
            <person name="Lee N.H."/>
            <person name="Galagan J."/>
            <person name="Salzberg S.L."/>
            <person name="Paulsen I.T."/>
            <person name="Dimopoulos G."/>
            <person name="Collins F.H."/>
            <person name="Bruce B."/>
            <person name="Fraser-Liggett C.M."/>
            <person name="Severson D.W."/>
        </authorList>
    </citation>
    <scope>NUCLEOTIDE SEQUENCE [LARGE SCALE GENOMIC DNA]</scope>
    <source>
        <strain>LVPib12</strain>
    </source>
</reference>
<organism>
    <name type="scientific">Aedes aegypti</name>
    <name type="common">Yellowfever mosquito</name>
    <name type="synonym">Culex aegypti</name>
    <dbReference type="NCBI Taxonomy" id="7159"/>
    <lineage>
        <taxon>Eukaryota</taxon>
        <taxon>Metazoa</taxon>
        <taxon>Ecdysozoa</taxon>
        <taxon>Arthropoda</taxon>
        <taxon>Hexapoda</taxon>
        <taxon>Insecta</taxon>
        <taxon>Pterygota</taxon>
        <taxon>Neoptera</taxon>
        <taxon>Endopterygota</taxon>
        <taxon>Diptera</taxon>
        <taxon>Nematocera</taxon>
        <taxon>Culicoidea</taxon>
        <taxon>Culicidae</taxon>
        <taxon>Culicinae</taxon>
        <taxon>Aedini</taxon>
        <taxon>Aedes</taxon>
        <taxon>Stegomyia</taxon>
    </lineage>
</organism>
<proteinExistence type="evidence at transcript level"/>
<protein>
    <recommendedName>
        <fullName>V-type proton ATPase catalytic subunit A</fullName>
        <shortName>V-ATPase subunit A</shortName>
        <ecNumber evidence="3">7.1.2.2</ecNumber>
    </recommendedName>
    <alternativeName>
        <fullName>V-ATPase 69 kDa subunit</fullName>
    </alternativeName>
    <alternativeName>
        <fullName>Vacuolar proton pump subunit alpha</fullName>
    </alternativeName>
</protein>
<keyword id="KW-0067">ATP-binding</keyword>
<keyword id="KW-0375">Hydrogen ion transport</keyword>
<keyword id="KW-0406">Ion transport</keyword>
<keyword id="KW-0547">Nucleotide-binding</keyword>
<keyword id="KW-1185">Reference proteome</keyword>
<keyword id="KW-1278">Translocase</keyword>
<keyword id="KW-0813">Transport</keyword>
<feature type="chain" id="PRO_0000144564" description="V-type proton ATPase catalytic subunit A">
    <location>
        <begin position="1"/>
        <end position="614"/>
    </location>
</feature>
<feature type="binding site" evidence="4">
    <location>
        <begin position="247"/>
        <end position="254"/>
    </location>
    <ligand>
        <name>ATP</name>
        <dbReference type="ChEBI" id="CHEBI:30616"/>
    </ligand>
</feature>
<feature type="sequence conflict" description="In Ref. 1; AAB71659." evidence="5" ref="1">
    <original>KGVNIPCLSRTQSWGFNPLNVKV</original>
    <variation>EGCEHSLLVPYRRLGIQPLERKGL</variation>
    <location>
        <begin position="118"/>
        <end position="140"/>
    </location>
</feature>
<feature type="sequence conflict" description="In Ref. 1; AAB71659." evidence="5" ref="1">
    <original>G</original>
    <variation>R</variation>
    <location>
        <position position="147"/>
    </location>
</feature>
<feature type="sequence conflict" description="In Ref. 1; AAB71659." evidence="5" ref="1">
    <original>LRT</original>
    <variation>TAY</variation>
    <location>
        <begin position="472"/>
        <end position="474"/>
    </location>
</feature>
<feature type="sequence conflict" description="In Ref. 1; AAB71659." evidence="5" ref="1">
    <original>G</original>
    <variation>GR</variation>
    <location>
        <position position="536"/>
    </location>
</feature>
<feature type="sequence conflict" description="In Ref. 1; AAB71659." evidence="5" ref="1">
    <original>VKDGEA</original>
    <variation>GRMAK</variation>
    <location>
        <begin position="587"/>
        <end position="592"/>
    </location>
</feature>
<evidence type="ECO:0000250" key="1">
    <source>
        <dbReference type="UniProtKB" id="P31404"/>
    </source>
</evidence>
<evidence type="ECO:0000250" key="2">
    <source>
        <dbReference type="UniProtKB" id="P38606"/>
    </source>
</evidence>
<evidence type="ECO:0000250" key="3">
    <source>
        <dbReference type="UniProtKB" id="P50516"/>
    </source>
</evidence>
<evidence type="ECO:0000255" key="4"/>
<evidence type="ECO:0000305" key="5"/>